<gene>
    <name evidence="1" type="primary">rplJ</name>
    <name type="ordered locus">SE_0303</name>
</gene>
<accession>Q8CTT2</accession>
<dbReference type="EMBL" id="AE015929">
    <property type="protein sequence ID" value="AAO03900.1"/>
    <property type="molecule type" value="Genomic_DNA"/>
</dbReference>
<dbReference type="RefSeq" id="NP_763858.1">
    <property type="nucleotide sequence ID" value="NC_004461.1"/>
</dbReference>
<dbReference type="RefSeq" id="WP_001832306.1">
    <property type="nucleotide sequence ID" value="NZ_WBME01000014.1"/>
</dbReference>
<dbReference type="SMR" id="Q8CTT2"/>
<dbReference type="GeneID" id="50019532"/>
<dbReference type="KEGG" id="sep:SE_0303"/>
<dbReference type="PATRIC" id="fig|176280.10.peg.278"/>
<dbReference type="eggNOG" id="COG0244">
    <property type="taxonomic scope" value="Bacteria"/>
</dbReference>
<dbReference type="HOGENOM" id="CLU_092227_2_0_9"/>
<dbReference type="OrthoDB" id="9808307at2"/>
<dbReference type="Proteomes" id="UP000001411">
    <property type="component" value="Chromosome"/>
</dbReference>
<dbReference type="GO" id="GO:0015934">
    <property type="term" value="C:large ribosomal subunit"/>
    <property type="evidence" value="ECO:0007669"/>
    <property type="project" value="InterPro"/>
</dbReference>
<dbReference type="GO" id="GO:0070180">
    <property type="term" value="F:large ribosomal subunit rRNA binding"/>
    <property type="evidence" value="ECO:0007669"/>
    <property type="project" value="UniProtKB-UniRule"/>
</dbReference>
<dbReference type="GO" id="GO:0003735">
    <property type="term" value="F:structural constituent of ribosome"/>
    <property type="evidence" value="ECO:0007669"/>
    <property type="project" value="InterPro"/>
</dbReference>
<dbReference type="GO" id="GO:0006412">
    <property type="term" value="P:translation"/>
    <property type="evidence" value="ECO:0007669"/>
    <property type="project" value="UniProtKB-UniRule"/>
</dbReference>
<dbReference type="CDD" id="cd05797">
    <property type="entry name" value="Ribosomal_L10"/>
    <property type="match status" value="1"/>
</dbReference>
<dbReference type="FunFam" id="3.30.70.1730:FF:000001">
    <property type="entry name" value="50S ribosomal protein L10"/>
    <property type="match status" value="1"/>
</dbReference>
<dbReference type="Gene3D" id="3.30.70.1730">
    <property type="match status" value="1"/>
</dbReference>
<dbReference type="Gene3D" id="6.10.250.290">
    <property type="match status" value="1"/>
</dbReference>
<dbReference type="HAMAP" id="MF_00362">
    <property type="entry name" value="Ribosomal_uL10"/>
    <property type="match status" value="1"/>
</dbReference>
<dbReference type="InterPro" id="IPR001790">
    <property type="entry name" value="Ribosomal_uL10"/>
</dbReference>
<dbReference type="InterPro" id="IPR043141">
    <property type="entry name" value="Ribosomal_uL10-like_sf"/>
</dbReference>
<dbReference type="InterPro" id="IPR022973">
    <property type="entry name" value="Ribosomal_uL10_bac"/>
</dbReference>
<dbReference type="InterPro" id="IPR047865">
    <property type="entry name" value="Ribosomal_uL10_bac_type"/>
</dbReference>
<dbReference type="InterPro" id="IPR002363">
    <property type="entry name" value="Ribosomal_uL10_CS_bac"/>
</dbReference>
<dbReference type="NCBIfam" id="NF000955">
    <property type="entry name" value="PRK00099.1-1"/>
    <property type="match status" value="1"/>
</dbReference>
<dbReference type="PANTHER" id="PTHR11560">
    <property type="entry name" value="39S RIBOSOMAL PROTEIN L10, MITOCHONDRIAL"/>
    <property type="match status" value="1"/>
</dbReference>
<dbReference type="Pfam" id="PF00466">
    <property type="entry name" value="Ribosomal_L10"/>
    <property type="match status" value="1"/>
</dbReference>
<dbReference type="SUPFAM" id="SSF160369">
    <property type="entry name" value="Ribosomal protein L10-like"/>
    <property type="match status" value="1"/>
</dbReference>
<dbReference type="PROSITE" id="PS01109">
    <property type="entry name" value="RIBOSOMAL_L10"/>
    <property type="match status" value="1"/>
</dbReference>
<evidence type="ECO:0000255" key="1">
    <source>
        <dbReference type="HAMAP-Rule" id="MF_00362"/>
    </source>
</evidence>
<evidence type="ECO:0000305" key="2"/>
<protein>
    <recommendedName>
        <fullName evidence="1">Large ribosomal subunit protein uL10</fullName>
    </recommendedName>
    <alternativeName>
        <fullName evidence="2">50S ribosomal protein L10</fullName>
    </alternativeName>
</protein>
<keyword id="KW-0687">Ribonucleoprotein</keyword>
<keyword id="KW-0689">Ribosomal protein</keyword>
<keyword id="KW-0694">RNA-binding</keyword>
<keyword id="KW-0699">rRNA-binding</keyword>
<name>RL10_STAES</name>
<feature type="chain" id="PRO_0000154711" description="Large ribosomal subunit protein uL10">
    <location>
        <begin position="1"/>
        <end position="166"/>
    </location>
</feature>
<comment type="function">
    <text evidence="1">Forms part of the ribosomal stalk, playing a central role in the interaction of the ribosome with GTP-bound translation factors.</text>
</comment>
<comment type="subunit">
    <text evidence="1">Part of the ribosomal stalk of the 50S ribosomal subunit. The N-terminus interacts with L11 and the large rRNA to form the base of the stalk. The C-terminus forms an elongated spine to which L12 dimers bind in a sequential fashion forming a multimeric L10(L12)X complex.</text>
</comment>
<comment type="similarity">
    <text evidence="1">Belongs to the universal ribosomal protein uL10 family.</text>
</comment>
<organism>
    <name type="scientific">Staphylococcus epidermidis (strain ATCC 12228 / FDA PCI 1200)</name>
    <dbReference type="NCBI Taxonomy" id="176280"/>
    <lineage>
        <taxon>Bacteria</taxon>
        <taxon>Bacillati</taxon>
        <taxon>Bacillota</taxon>
        <taxon>Bacilli</taxon>
        <taxon>Bacillales</taxon>
        <taxon>Staphylococcaceae</taxon>
        <taxon>Staphylococcus</taxon>
    </lineage>
</organism>
<proteinExistence type="inferred from homology"/>
<sequence>MSAIIEAKKQQVDTIAEQLKNSVSTVIVDYRGLTVAEVTELRSQLREAGVEYKVYKNTMVRRAAEQAGIEGLDEFLTGPTAIATSTEDVVAPAKVIAGFAKEHEALEVKTGVMEGNVISAEEVKTVGSLPSHDGLVSMLLSVLQAPVRNFAYAVKAVGEQKEESAE</sequence>
<reference key="1">
    <citation type="journal article" date="2003" name="Mol. Microbiol.">
        <title>Genome-based analysis of virulence genes in a non-biofilm-forming Staphylococcus epidermidis strain (ATCC 12228).</title>
        <authorList>
            <person name="Zhang Y.-Q."/>
            <person name="Ren S.-X."/>
            <person name="Li H.-L."/>
            <person name="Wang Y.-X."/>
            <person name="Fu G."/>
            <person name="Yang J."/>
            <person name="Qin Z.-Q."/>
            <person name="Miao Y.-G."/>
            <person name="Wang W.-Y."/>
            <person name="Chen R.-S."/>
            <person name="Shen Y."/>
            <person name="Chen Z."/>
            <person name="Yuan Z.-H."/>
            <person name="Zhao G.-P."/>
            <person name="Qu D."/>
            <person name="Danchin A."/>
            <person name="Wen Y.-M."/>
        </authorList>
    </citation>
    <scope>NUCLEOTIDE SEQUENCE [LARGE SCALE GENOMIC DNA]</scope>
    <source>
        <strain>ATCC 12228 / FDA PCI 1200</strain>
    </source>
</reference>